<protein>
    <recommendedName>
        <fullName>(S)-3,5-dihydroxyphenylglycine transaminase</fullName>
        <ecNumber>2.6.1.103</ecNumber>
    </recommendedName>
    <alternativeName>
        <fullName>p-hydroxyphenylglycine transaminase</fullName>
    </alternativeName>
</protein>
<accession>O52815</accession>
<reference key="1">
    <citation type="journal article" date="1998" name="Chem. Biol.">
        <title>Sequencing and analysis of genes involved in the biosynthesis of a vancomycin group antibiotic.</title>
        <authorList>
            <person name="van Wageningen A."/>
            <person name="Kirkpatrick P."/>
            <person name="Williams D."/>
            <person name="Harris B."/>
            <person name="Kershaw J."/>
            <person name="Lennard N."/>
            <person name="Jones M."/>
            <person name="Jones S."/>
            <person name="Solenberg P."/>
        </authorList>
    </citation>
    <scope>NUCLEOTIDE SEQUENCE [GENOMIC DNA]</scope>
    <scope>PATHWAY</scope>
</reference>
<reference key="2">
    <citation type="journal article" date="2000" name="Chem. Biol.">
        <title>Biosynthesis of L-p-hydroxyphenylglycine, a non-proteinogenic amino acid constituent of peptide antibiotics.</title>
        <authorList>
            <person name="Hubbard B.K."/>
            <person name="Thomas M.G."/>
            <person name="Walsh C.T."/>
        </authorList>
    </citation>
    <scope>FUNCTION</scope>
    <scope>CATALYTIC ACTIVITY</scope>
    <scope>COFACTOR</scope>
</reference>
<evidence type="ECO:0000250" key="1"/>
<evidence type="ECO:0000269" key="2">
    <source>
    </source>
</evidence>
<evidence type="ECO:0000269" key="3">
    <source>
    </source>
</evidence>
<evidence type="ECO:0000305" key="4"/>
<feature type="chain" id="PRO_0000430442" description="(S)-3,5-dihydroxyphenylglycine transaminase">
    <location>
        <begin position="1"/>
        <end position="438"/>
    </location>
</feature>
<feature type="modified residue" description="N6-(pyridoxal phosphate)lysine" evidence="1">
    <location>
        <position position="266"/>
    </location>
</feature>
<gene>
    <name type="primary">hpgT</name>
</gene>
<keyword id="KW-0032">Aminotransferase</keyword>
<keyword id="KW-0045">Antibiotic biosynthesis</keyword>
<keyword id="KW-0663">Pyridoxal phosphate</keyword>
<keyword id="KW-0808">Transferase</keyword>
<organism>
    <name type="scientific">Amycolatopsis orientalis</name>
    <name type="common">Nocardia orientalis</name>
    <dbReference type="NCBI Taxonomy" id="31958"/>
    <lineage>
        <taxon>Bacteria</taxon>
        <taxon>Bacillati</taxon>
        <taxon>Actinomycetota</taxon>
        <taxon>Actinomycetes</taxon>
        <taxon>Pseudonocardiales</taxon>
        <taxon>Pseudonocardiaceae</taxon>
        <taxon>Amycolatopsis</taxon>
    </lineage>
</organism>
<dbReference type="EC" id="2.6.1.103"/>
<dbReference type="EMBL" id="AJ223998">
    <property type="protein sequence ID" value="CAA11790.1"/>
    <property type="molecule type" value="Genomic_DNA"/>
</dbReference>
<dbReference type="PIR" id="T30600">
    <property type="entry name" value="T30600"/>
</dbReference>
<dbReference type="SMR" id="O52815"/>
<dbReference type="STRING" id="31958.SD37_33665"/>
<dbReference type="BRENDA" id="2.6.1.B17">
    <property type="organism ID" value="315"/>
</dbReference>
<dbReference type="UniPathway" id="UPA00162"/>
<dbReference type="GO" id="GO:0030170">
    <property type="term" value="F:pyridoxal phosphate binding"/>
    <property type="evidence" value="ECO:0007669"/>
    <property type="project" value="InterPro"/>
</dbReference>
<dbReference type="GO" id="GO:0008483">
    <property type="term" value="F:transaminase activity"/>
    <property type="evidence" value="ECO:0000314"/>
    <property type="project" value="UniProtKB"/>
</dbReference>
<dbReference type="GO" id="GO:1901605">
    <property type="term" value="P:alpha-amino acid metabolic process"/>
    <property type="evidence" value="ECO:0007669"/>
    <property type="project" value="TreeGrafter"/>
</dbReference>
<dbReference type="GO" id="GO:0033072">
    <property type="term" value="P:vancomycin biosynthetic process"/>
    <property type="evidence" value="ECO:0000314"/>
    <property type="project" value="UniProtKB"/>
</dbReference>
<dbReference type="CDD" id="cd00609">
    <property type="entry name" value="AAT_like"/>
    <property type="match status" value="1"/>
</dbReference>
<dbReference type="FunFam" id="3.40.640.10:FF:000305">
    <property type="entry name" value="(S)-3,5-dihydroxyphenylglycine transaminase"/>
    <property type="match status" value="1"/>
</dbReference>
<dbReference type="Gene3D" id="3.90.1150.10">
    <property type="entry name" value="Aspartate Aminotransferase, domain 1"/>
    <property type="match status" value="1"/>
</dbReference>
<dbReference type="Gene3D" id="3.40.640.10">
    <property type="entry name" value="Type I PLP-dependent aspartate aminotransferase-like (Major domain)"/>
    <property type="match status" value="1"/>
</dbReference>
<dbReference type="InterPro" id="IPR004839">
    <property type="entry name" value="Aminotransferase_I/II_large"/>
</dbReference>
<dbReference type="InterPro" id="IPR050859">
    <property type="entry name" value="Class-I_PLP-dep_aminotransf"/>
</dbReference>
<dbReference type="InterPro" id="IPR015424">
    <property type="entry name" value="PyrdxlP-dep_Trfase"/>
</dbReference>
<dbReference type="InterPro" id="IPR015421">
    <property type="entry name" value="PyrdxlP-dep_Trfase_major"/>
</dbReference>
<dbReference type="InterPro" id="IPR015422">
    <property type="entry name" value="PyrdxlP-dep_Trfase_small"/>
</dbReference>
<dbReference type="PANTHER" id="PTHR42790">
    <property type="entry name" value="AMINOTRANSFERASE"/>
    <property type="match status" value="1"/>
</dbReference>
<dbReference type="PANTHER" id="PTHR42790:SF19">
    <property type="entry name" value="KYNURENINE_ALPHA-AMINOADIPATE AMINOTRANSFERASE, MITOCHONDRIAL"/>
    <property type="match status" value="1"/>
</dbReference>
<dbReference type="Pfam" id="PF00155">
    <property type="entry name" value="Aminotran_1_2"/>
    <property type="match status" value="1"/>
</dbReference>
<dbReference type="SUPFAM" id="SSF53383">
    <property type="entry name" value="PLP-dependent transferases"/>
    <property type="match status" value="1"/>
</dbReference>
<comment type="function">
    <text evidence="2">Catalyzes the transamination of p-hydroxybenzoylformate to L-p-hydroxyphenylglycine as part of the biosynthesis of the (S)-3,5-dihydroxyphenylglycine constituent of the glycopeptide antibiotic chloroeremomycin, a member of the vancomycin group of antibiotics.</text>
</comment>
<comment type="catalytic activity">
    <reaction evidence="2">
        <text>(S)-3,5-dihydroxyphenylglycine + 2-oxoglutarate = 2-(3,5-dihydroxyphenyl)-2-oxoacetate + L-glutamate</text>
        <dbReference type="Rhea" id="RHEA:38347"/>
        <dbReference type="ChEBI" id="CHEBI:16810"/>
        <dbReference type="ChEBI" id="CHEBI:29985"/>
        <dbReference type="ChEBI" id="CHEBI:75204"/>
        <dbReference type="ChEBI" id="CHEBI:75210"/>
        <dbReference type="EC" id="2.6.1.103"/>
    </reaction>
</comment>
<comment type="cofactor">
    <cofactor evidence="2">
        <name>pyridoxal 5'-phosphate</name>
        <dbReference type="ChEBI" id="CHEBI:597326"/>
    </cofactor>
</comment>
<comment type="pathway">
    <text evidence="3">Antibiotic biosynthesis; vancomycin biosynthesis.</text>
</comment>
<comment type="similarity">
    <text evidence="4">Belongs to the class-I pyridoxal-phosphate-dependent aminotransferase family.</text>
</comment>
<proteinExistence type="evidence at protein level"/>
<name>HPGT_AMYOR</name>
<sequence>MEILVFMDSYGLSTQLSMETLHGSLTDPAISSMNLLNELIDEYPVAISMAAGRPYEEFFDVRLIHEYIDAYCDHLRHDRKLAEAVVTRTLFQYGTTKGIIADLIARNLAEDENIDAAAESVVVTVGAQEAMFLILRTLRADERDVLLAPAPTYVGLTGAALLTDTPVWPVQSTANGVDPEDLVLQLKRADEQGKRVRACYVTPNFANPTGTSMDLPARHRLLEVAEANGILLLEDNAYGLFGSERLPSLKSLDRSGNVVYIGSFAKTGMPGARVGYVVADQRVAGGGLLADQLSKLKGMLTVNTSPIAQAVIAGKLLLNDFSLTKANAREIAIYQRNLQLTLSELERTLGGLPEVGWNTPTGGFFVTVTVPFVVDDELLAHAARDHGVLFTPMHHFYGGKDGFNQLRLSISLLTPELIKEGVTRLAALITARLRWPRA</sequence>